<sequence length="266" mass="28925">MKLSLSSPPYADAPVVVLISGLGGSGSYWLPQLAVLEQEYQVVCYDQRGTGNNPDTLAEDYSIAQMAAELHQALVAAGIERYAVVGHALGALVGMQLALDYPASVTMLVSVNGWLRINAHTRRCFQVRERLLYSGGAQAWVEAQPLFLYPADWMAARAPRLEAEDALALAHFQGKNNLLRRLNALKRADFSHHADRIRCPVQIICASDDLLVPTACSSELHAALPDSQKMVMPYGGHACNVTDPETFNALLLNGLASLLHHREAAL</sequence>
<dbReference type="EC" id="3.5.1.-" evidence="1"/>
<dbReference type="EMBL" id="AE005674">
    <property type="protein sequence ID" value="AAN42638.2"/>
    <property type="molecule type" value="Genomic_DNA"/>
</dbReference>
<dbReference type="EMBL" id="AE014073">
    <property type="protein sequence ID" value="AAP16523.1"/>
    <property type="molecule type" value="Genomic_DNA"/>
</dbReference>
<dbReference type="RefSeq" id="NP_706931.2">
    <property type="nucleotide sequence ID" value="NC_004337.2"/>
</dbReference>
<dbReference type="RefSeq" id="WP_000777662.1">
    <property type="nucleotide sequence ID" value="NZ_WPGW01000134.1"/>
</dbReference>
<dbReference type="SMR" id="Q83LK8"/>
<dbReference type="STRING" id="198214.SF1012"/>
<dbReference type="ESTHER" id="shifl-YCDJ">
    <property type="family name" value="RutD"/>
</dbReference>
<dbReference type="PaxDb" id="198214-SF1012"/>
<dbReference type="GeneID" id="1023981"/>
<dbReference type="KEGG" id="sfl:SF1012"/>
<dbReference type="KEGG" id="sfx:S1082"/>
<dbReference type="PATRIC" id="fig|198214.7.peg.1176"/>
<dbReference type="HOGENOM" id="CLU_020336_50_1_6"/>
<dbReference type="Proteomes" id="UP000001006">
    <property type="component" value="Chromosome"/>
</dbReference>
<dbReference type="Proteomes" id="UP000002673">
    <property type="component" value="Chromosome"/>
</dbReference>
<dbReference type="GO" id="GO:0016811">
    <property type="term" value="F:hydrolase activity, acting on carbon-nitrogen (but not peptide) bonds, in linear amides"/>
    <property type="evidence" value="ECO:0007669"/>
    <property type="project" value="InterPro"/>
</dbReference>
<dbReference type="GO" id="GO:0019740">
    <property type="term" value="P:nitrogen utilization"/>
    <property type="evidence" value="ECO:0007669"/>
    <property type="project" value="UniProtKB-UniRule"/>
</dbReference>
<dbReference type="GO" id="GO:0006212">
    <property type="term" value="P:uracil catabolic process"/>
    <property type="evidence" value="ECO:0007669"/>
    <property type="project" value="UniProtKB-UniRule"/>
</dbReference>
<dbReference type="FunFam" id="3.40.50.1820:FF:000052">
    <property type="entry name" value="Putative aminoacrylate hydrolase RutD"/>
    <property type="match status" value="1"/>
</dbReference>
<dbReference type="Gene3D" id="3.40.50.1820">
    <property type="entry name" value="alpha/beta hydrolase"/>
    <property type="match status" value="1"/>
</dbReference>
<dbReference type="HAMAP" id="MF_00832">
    <property type="entry name" value="RutD"/>
    <property type="match status" value="1"/>
</dbReference>
<dbReference type="InterPro" id="IPR000073">
    <property type="entry name" value="AB_hydrolase_1"/>
</dbReference>
<dbReference type="InterPro" id="IPR029058">
    <property type="entry name" value="AB_hydrolase_fold"/>
</dbReference>
<dbReference type="InterPro" id="IPR050266">
    <property type="entry name" value="AB_hydrolase_sf"/>
</dbReference>
<dbReference type="InterPro" id="IPR019913">
    <property type="entry name" value="Pyrimidine_utilisation_RutD"/>
</dbReference>
<dbReference type="NCBIfam" id="TIGR03611">
    <property type="entry name" value="RutD"/>
    <property type="match status" value="1"/>
</dbReference>
<dbReference type="PANTHER" id="PTHR43798">
    <property type="entry name" value="MONOACYLGLYCEROL LIPASE"/>
    <property type="match status" value="1"/>
</dbReference>
<dbReference type="Pfam" id="PF00561">
    <property type="entry name" value="Abhydrolase_1"/>
    <property type="match status" value="1"/>
</dbReference>
<dbReference type="PRINTS" id="PR00111">
    <property type="entry name" value="ABHYDROLASE"/>
</dbReference>
<dbReference type="SUPFAM" id="SSF53474">
    <property type="entry name" value="alpha/beta-Hydrolases"/>
    <property type="match status" value="1"/>
</dbReference>
<accession>Q83LK8</accession>
<accession>Q7UCZ9</accession>
<reference key="1">
    <citation type="journal article" date="2002" name="Nucleic Acids Res.">
        <title>Genome sequence of Shigella flexneri 2a: insights into pathogenicity through comparison with genomes of Escherichia coli K12 and O157.</title>
        <authorList>
            <person name="Jin Q."/>
            <person name="Yuan Z."/>
            <person name="Xu J."/>
            <person name="Wang Y."/>
            <person name="Shen Y."/>
            <person name="Lu W."/>
            <person name="Wang J."/>
            <person name="Liu H."/>
            <person name="Yang J."/>
            <person name="Yang F."/>
            <person name="Zhang X."/>
            <person name="Zhang J."/>
            <person name="Yang G."/>
            <person name="Wu H."/>
            <person name="Qu D."/>
            <person name="Dong J."/>
            <person name="Sun L."/>
            <person name="Xue Y."/>
            <person name="Zhao A."/>
            <person name="Gao Y."/>
            <person name="Zhu J."/>
            <person name="Kan B."/>
            <person name="Ding K."/>
            <person name="Chen S."/>
            <person name="Cheng H."/>
            <person name="Yao Z."/>
            <person name="He B."/>
            <person name="Chen R."/>
            <person name="Ma D."/>
            <person name="Qiang B."/>
            <person name="Wen Y."/>
            <person name="Hou Y."/>
            <person name="Yu J."/>
        </authorList>
    </citation>
    <scope>NUCLEOTIDE SEQUENCE [LARGE SCALE GENOMIC DNA]</scope>
    <source>
        <strain>301 / Serotype 2a</strain>
    </source>
</reference>
<reference key="2">
    <citation type="journal article" date="2003" name="Infect. Immun.">
        <title>Complete genome sequence and comparative genomics of Shigella flexneri serotype 2a strain 2457T.</title>
        <authorList>
            <person name="Wei J."/>
            <person name="Goldberg M.B."/>
            <person name="Burland V."/>
            <person name="Venkatesan M.M."/>
            <person name="Deng W."/>
            <person name="Fournier G."/>
            <person name="Mayhew G.F."/>
            <person name="Plunkett G. III"/>
            <person name="Rose D.J."/>
            <person name="Darling A."/>
            <person name="Mau B."/>
            <person name="Perna N.T."/>
            <person name="Payne S.M."/>
            <person name="Runyen-Janecky L.J."/>
            <person name="Zhou S."/>
            <person name="Schwartz D.C."/>
            <person name="Blattner F.R."/>
        </authorList>
    </citation>
    <scope>NUCLEOTIDE SEQUENCE [LARGE SCALE GENOMIC DNA]</scope>
    <source>
        <strain>ATCC 700930 / 2457T / Serotype 2a</strain>
    </source>
</reference>
<protein>
    <recommendedName>
        <fullName evidence="1">Putative carbamate hydrolase RutD</fullName>
        <ecNumber evidence="1">3.5.1.-</ecNumber>
    </recommendedName>
    <alternativeName>
        <fullName evidence="1">Aminohydrolase</fullName>
    </alternativeName>
</protein>
<comment type="function">
    <text evidence="1">Involved in pyrimidine catabolism. May facilitate the hydrolysis of carbamate, a reaction that can also occur spontaneously.</text>
</comment>
<comment type="catalytic activity">
    <reaction evidence="1">
        <text>carbamate + 2 H(+) = NH4(+) + CO2</text>
        <dbReference type="Rhea" id="RHEA:15649"/>
        <dbReference type="ChEBI" id="CHEBI:13941"/>
        <dbReference type="ChEBI" id="CHEBI:15378"/>
        <dbReference type="ChEBI" id="CHEBI:16526"/>
        <dbReference type="ChEBI" id="CHEBI:28938"/>
    </reaction>
</comment>
<comment type="similarity">
    <text evidence="1">Belongs to the AB hydrolase superfamily. Hydrolase RutD family.</text>
</comment>
<organism>
    <name type="scientific">Shigella flexneri</name>
    <dbReference type="NCBI Taxonomy" id="623"/>
    <lineage>
        <taxon>Bacteria</taxon>
        <taxon>Pseudomonadati</taxon>
        <taxon>Pseudomonadota</taxon>
        <taxon>Gammaproteobacteria</taxon>
        <taxon>Enterobacterales</taxon>
        <taxon>Enterobacteriaceae</taxon>
        <taxon>Shigella</taxon>
    </lineage>
</organism>
<keyword id="KW-0378">Hydrolase</keyword>
<keyword id="KW-1185">Reference proteome</keyword>
<feature type="chain" id="PRO_0000402982" description="Putative carbamate hydrolase RutD">
    <location>
        <begin position="1"/>
        <end position="266"/>
    </location>
</feature>
<feature type="domain" description="AB hydrolase-1" evidence="1">
    <location>
        <begin position="14"/>
        <end position="115"/>
    </location>
</feature>
<gene>
    <name evidence="1" type="primary">rutD</name>
    <name type="ordered locus">SF1012</name>
    <name type="ordered locus">S1082</name>
</gene>
<evidence type="ECO:0000255" key="1">
    <source>
        <dbReference type="HAMAP-Rule" id="MF_00832"/>
    </source>
</evidence>
<proteinExistence type="inferred from homology"/>
<name>RUTD_SHIFL</name>